<proteinExistence type="evidence at transcript level"/>
<keyword id="KW-1035">Host cytoplasm</keyword>
<keyword id="KW-1040">Host Golgi apparatus</keyword>
<keyword id="KW-1048">Host nucleus</keyword>
<keyword id="KW-0426">Late protein</keyword>
<keyword id="KW-0946">Virion</keyword>
<organismHost>
    <name type="scientific">Equus caballus</name>
    <name type="common">Horse</name>
    <dbReference type="NCBI Taxonomy" id="9796"/>
</organismHost>
<feature type="chain" id="PRO_0000115982" description="Protein UL24 homolog">
    <location>
        <begin position="1"/>
        <end position="272"/>
    </location>
</feature>
<organism>
    <name type="scientific">Equine herpesvirus 4 (strain 1942)</name>
    <name type="common">EHV-4</name>
    <name type="synonym">Equine rhinopneumonitis virus</name>
    <dbReference type="NCBI Taxonomy" id="10333"/>
    <lineage>
        <taxon>Viruses</taxon>
        <taxon>Duplodnaviria</taxon>
        <taxon>Heunggongvirae</taxon>
        <taxon>Peploviricota</taxon>
        <taxon>Herviviricetes</taxon>
        <taxon>Herpesvirales</taxon>
        <taxon>Orthoherpesviridae</taxon>
        <taxon>Alphaherpesvirinae</taxon>
        <taxon>Varicellovirus</taxon>
        <taxon>Varicellovirus equidalpha4</taxon>
        <taxon>Equid alphaherpesvirus 4</taxon>
    </lineage>
</organism>
<sequence length="272" mass="29492">MKRKQRLTARSRLRAGIRCHNRFYNAMVQDLASAKKNGVYGARLAPLFSELVPAETLKTAMGVSLAFEVNLGQRRPDCVCTVQFGHGSDAKGVCILIELKTCRFSKNMNTASKNLQRKGGMRQLHDSCRLLAKTLPPGSGEILLAPVLVFVAQRGMRVLRVTRLSPQVVYSNAAVLSCTISRLAEYSPPISERSTRRRCVTRRTNSKAFRAKTTTGSIQPITQAKPAATAAVASLFSATAQANTTNAAVGYQPATISLANPLAWVASLFAPK</sequence>
<name>UL24_EHV4</name>
<protein>
    <recommendedName>
        <fullName>Protein UL24 homolog</fullName>
    </recommendedName>
</protein>
<accession>P24432</accession>
<gene>
    <name type="primary">UL24</name>
</gene>
<reference key="1">
    <citation type="journal article" date="1990" name="J. Gen. Virol.">
        <title>The nucleotide sequence of the equine herpesvirus 4 thymidine kinase gene.</title>
        <authorList>
            <person name="Nicolson L."/>
            <person name="Cullinane A.A."/>
            <person name="Onions D.E."/>
        </authorList>
    </citation>
    <scope>NUCLEOTIDE SEQUENCE [GENOMIC DNA]</scope>
</reference>
<comment type="function">
    <text evidence="1">May participate in nuclear egress of viral particles. Plays a role in the dispersal of several host nucleolar proteins including NCL/nucleolin and NPM1. Since deletion of host NCL/nucleolin negatively impact on nuclear egress, UL24 supposedly acts on this process through its effect on host nucleoli (By similarity).</text>
</comment>
<comment type="subcellular location">
    <subcellularLocation>
        <location evidence="1">Virion</location>
    </subcellularLocation>
    <subcellularLocation>
        <location evidence="1">Host cytoplasm</location>
    </subcellularLocation>
    <subcellularLocation>
        <location evidence="1">Host nucleus</location>
        <location evidence="1">Host nucleolus</location>
    </subcellularLocation>
    <subcellularLocation>
        <location evidence="1">Host Golgi apparatus</location>
    </subcellularLocation>
</comment>
<comment type="induction">
    <text>Expressed late in the infection cycle.</text>
</comment>
<comment type="similarity">
    <text evidence="2">Belongs to the herpesviridae UL24 family.</text>
</comment>
<evidence type="ECO:0000250" key="1"/>
<evidence type="ECO:0000305" key="2"/>
<dbReference type="EMBL" id="D14486">
    <property type="protein sequence ID" value="BAA03377.1"/>
    <property type="molecule type" value="Genomic_DNA"/>
</dbReference>
<dbReference type="PIR" id="T42581">
    <property type="entry name" value="T42581"/>
</dbReference>
<dbReference type="KEGG" id="vg:1487603"/>
<dbReference type="GO" id="GO:0044177">
    <property type="term" value="C:host cell Golgi apparatus"/>
    <property type="evidence" value="ECO:0007669"/>
    <property type="project" value="UniProtKB-SubCell"/>
</dbReference>
<dbReference type="GO" id="GO:0044196">
    <property type="term" value="C:host cell nucleolus"/>
    <property type="evidence" value="ECO:0007669"/>
    <property type="project" value="UniProtKB-SubCell"/>
</dbReference>
<dbReference type="GO" id="GO:0044423">
    <property type="term" value="C:virion component"/>
    <property type="evidence" value="ECO:0007669"/>
    <property type="project" value="UniProtKB-KW"/>
</dbReference>
<dbReference type="InterPro" id="IPR002580">
    <property type="entry name" value="Herpes_UL24"/>
</dbReference>
<dbReference type="Pfam" id="PF01646">
    <property type="entry name" value="Herpes_UL24"/>
    <property type="match status" value="1"/>
</dbReference>